<name>EFTU_HAEIN</name>
<reference key="1">
    <citation type="journal article" date="1995" name="Science">
        <title>Whole-genome random sequencing and assembly of Haemophilus influenzae Rd.</title>
        <authorList>
            <person name="Fleischmann R.D."/>
            <person name="Adams M.D."/>
            <person name="White O."/>
            <person name="Clayton R.A."/>
            <person name="Kirkness E.F."/>
            <person name="Kerlavage A.R."/>
            <person name="Bult C.J."/>
            <person name="Tomb J.-F."/>
            <person name="Dougherty B.A."/>
            <person name="Merrick J.M."/>
            <person name="McKenney K."/>
            <person name="Sutton G.G."/>
            <person name="FitzHugh W."/>
            <person name="Fields C.A."/>
            <person name="Gocayne J.D."/>
            <person name="Scott J.D."/>
            <person name="Shirley R."/>
            <person name="Liu L.-I."/>
            <person name="Glodek A."/>
            <person name="Kelley J.M."/>
            <person name="Weidman J.F."/>
            <person name="Phillips C.A."/>
            <person name="Spriggs T."/>
            <person name="Hedblom E."/>
            <person name="Cotton M.D."/>
            <person name="Utterback T.R."/>
            <person name="Hanna M.C."/>
            <person name="Nguyen D.T."/>
            <person name="Saudek D.M."/>
            <person name="Brandon R.C."/>
            <person name="Fine L.D."/>
            <person name="Fritchman J.L."/>
            <person name="Fuhrmann J.L."/>
            <person name="Geoghagen N.S.M."/>
            <person name="Gnehm C.L."/>
            <person name="McDonald L.A."/>
            <person name="Small K.V."/>
            <person name="Fraser C.M."/>
            <person name="Smith H.O."/>
            <person name="Venter J.C."/>
        </authorList>
    </citation>
    <scope>NUCLEOTIDE SEQUENCE [LARGE SCALE GENOMIC DNA]</scope>
    <source>
        <strain>ATCC 51907 / DSM 11121 / KW20 / Rd</strain>
    </source>
</reference>
<proteinExistence type="inferred from homology"/>
<dbReference type="EC" id="3.6.5.3" evidence="2"/>
<dbReference type="EMBL" id="L42023">
    <property type="protein sequence ID" value="AAC22236.1"/>
    <property type="molecule type" value="Genomic_DNA"/>
</dbReference>
<dbReference type="EMBL" id="L42023">
    <property type="protein sequence ID" value="AAC22292.1"/>
    <property type="molecule type" value="Genomic_DNA"/>
</dbReference>
<dbReference type="PIR" id="E64078">
    <property type="entry name" value="E64078"/>
</dbReference>
<dbReference type="RefSeq" id="NP_438736.1">
    <property type="nucleotide sequence ID" value="NC_000907.1"/>
</dbReference>
<dbReference type="RefSeq" id="NP_438792.1">
    <property type="nucleotide sequence ID" value="NC_000907.1"/>
</dbReference>
<dbReference type="SMR" id="P43926"/>
<dbReference type="STRING" id="71421.HI_0578"/>
<dbReference type="EnsemblBacteria" id="AAC22236">
    <property type="protein sequence ID" value="AAC22236"/>
    <property type="gene ID" value="HI_0578"/>
</dbReference>
<dbReference type="EnsemblBacteria" id="AAC22292">
    <property type="protein sequence ID" value="AAC22292"/>
    <property type="gene ID" value="HI_0632"/>
</dbReference>
<dbReference type="KEGG" id="hin:HI_0578"/>
<dbReference type="KEGG" id="hin:HI_0632"/>
<dbReference type="PATRIC" id="fig|71421.8.peg.599"/>
<dbReference type="eggNOG" id="COG0050">
    <property type="taxonomic scope" value="Bacteria"/>
</dbReference>
<dbReference type="HOGENOM" id="CLU_007265_0_2_6"/>
<dbReference type="OrthoDB" id="9803139at2"/>
<dbReference type="PhylomeDB" id="P43926"/>
<dbReference type="Proteomes" id="UP000000579">
    <property type="component" value="Chromosome"/>
</dbReference>
<dbReference type="GO" id="GO:0005737">
    <property type="term" value="C:cytoplasm"/>
    <property type="evidence" value="ECO:0007669"/>
    <property type="project" value="UniProtKB-SubCell"/>
</dbReference>
<dbReference type="GO" id="GO:0005525">
    <property type="term" value="F:GTP binding"/>
    <property type="evidence" value="ECO:0007669"/>
    <property type="project" value="UniProtKB-UniRule"/>
</dbReference>
<dbReference type="GO" id="GO:0003924">
    <property type="term" value="F:GTPase activity"/>
    <property type="evidence" value="ECO:0007669"/>
    <property type="project" value="InterPro"/>
</dbReference>
<dbReference type="GO" id="GO:0097216">
    <property type="term" value="F:guanosine tetraphosphate binding"/>
    <property type="evidence" value="ECO:0007669"/>
    <property type="project" value="UniProtKB-ARBA"/>
</dbReference>
<dbReference type="GO" id="GO:0003746">
    <property type="term" value="F:translation elongation factor activity"/>
    <property type="evidence" value="ECO:0000318"/>
    <property type="project" value="GO_Central"/>
</dbReference>
<dbReference type="GO" id="GO:0006414">
    <property type="term" value="P:translational elongation"/>
    <property type="evidence" value="ECO:0000318"/>
    <property type="project" value="GO_Central"/>
</dbReference>
<dbReference type="CDD" id="cd01884">
    <property type="entry name" value="EF_Tu"/>
    <property type="match status" value="1"/>
</dbReference>
<dbReference type="CDD" id="cd03697">
    <property type="entry name" value="EFTU_II"/>
    <property type="match status" value="1"/>
</dbReference>
<dbReference type="CDD" id="cd03707">
    <property type="entry name" value="EFTU_III"/>
    <property type="match status" value="1"/>
</dbReference>
<dbReference type="FunFam" id="2.40.30.10:FF:000001">
    <property type="entry name" value="Elongation factor Tu"/>
    <property type="match status" value="1"/>
</dbReference>
<dbReference type="FunFam" id="3.40.50.300:FF:000003">
    <property type="entry name" value="Elongation factor Tu"/>
    <property type="match status" value="1"/>
</dbReference>
<dbReference type="Gene3D" id="3.40.50.300">
    <property type="entry name" value="P-loop containing nucleotide triphosphate hydrolases"/>
    <property type="match status" value="1"/>
</dbReference>
<dbReference type="Gene3D" id="2.40.30.10">
    <property type="entry name" value="Translation factors"/>
    <property type="match status" value="2"/>
</dbReference>
<dbReference type="HAMAP" id="MF_00118_B">
    <property type="entry name" value="EF_Tu_B"/>
    <property type="match status" value="1"/>
</dbReference>
<dbReference type="InterPro" id="IPR041709">
    <property type="entry name" value="EF-Tu_GTP-bd"/>
</dbReference>
<dbReference type="InterPro" id="IPR050055">
    <property type="entry name" value="EF-Tu_GTPase"/>
</dbReference>
<dbReference type="InterPro" id="IPR004161">
    <property type="entry name" value="EFTu-like_2"/>
</dbReference>
<dbReference type="InterPro" id="IPR033720">
    <property type="entry name" value="EFTU_2"/>
</dbReference>
<dbReference type="InterPro" id="IPR031157">
    <property type="entry name" value="G_TR_CS"/>
</dbReference>
<dbReference type="InterPro" id="IPR027417">
    <property type="entry name" value="P-loop_NTPase"/>
</dbReference>
<dbReference type="InterPro" id="IPR005225">
    <property type="entry name" value="Small_GTP-bd"/>
</dbReference>
<dbReference type="InterPro" id="IPR000795">
    <property type="entry name" value="T_Tr_GTP-bd_dom"/>
</dbReference>
<dbReference type="InterPro" id="IPR009000">
    <property type="entry name" value="Transl_B-barrel_sf"/>
</dbReference>
<dbReference type="InterPro" id="IPR009001">
    <property type="entry name" value="Transl_elong_EF1A/Init_IF2_C"/>
</dbReference>
<dbReference type="InterPro" id="IPR004541">
    <property type="entry name" value="Transl_elong_EFTu/EF1A_bac/org"/>
</dbReference>
<dbReference type="InterPro" id="IPR004160">
    <property type="entry name" value="Transl_elong_EFTu/EF1A_C"/>
</dbReference>
<dbReference type="NCBIfam" id="TIGR00485">
    <property type="entry name" value="EF-Tu"/>
    <property type="match status" value="1"/>
</dbReference>
<dbReference type="NCBIfam" id="NF000766">
    <property type="entry name" value="PRK00049.1"/>
    <property type="match status" value="1"/>
</dbReference>
<dbReference type="NCBIfam" id="NF009372">
    <property type="entry name" value="PRK12735.1"/>
    <property type="match status" value="1"/>
</dbReference>
<dbReference type="NCBIfam" id="NF009373">
    <property type="entry name" value="PRK12736.1"/>
    <property type="match status" value="1"/>
</dbReference>
<dbReference type="NCBIfam" id="TIGR00231">
    <property type="entry name" value="small_GTP"/>
    <property type="match status" value="1"/>
</dbReference>
<dbReference type="PANTHER" id="PTHR43721:SF22">
    <property type="entry name" value="ELONGATION FACTOR TU, MITOCHONDRIAL"/>
    <property type="match status" value="1"/>
</dbReference>
<dbReference type="PANTHER" id="PTHR43721">
    <property type="entry name" value="ELONGATION FACTOR TU-RELATED"/>
    <property type="match status" value="1"/>
</dbReference>
<dbReference type="Pfam" id="PF00009">
    <property type="entry name" value="GTP_EFTU"/>
    <property type="match status" value="1"/>
</dbReference>
<dbReference type="Pfam" id="PF03144">
    <property type="entry name" value="GTP_EFTU_D2"/>
    <property type="match status" value="1"/>
</dbReference>
<dbReference type="Pfam" id="PF03143">
    <property type="entry name" value="GTP_EFTU_D3"/>
    <property type="match status" value="1"/>
</dbReference>
<dbReference type="PRINTS" id="PR00315">
    <property type="entry name" value="ELONGATNFCT"/>
</dbReference>
<dbReference type="SUPFAM" id="SSF50465">
    <property type="entry name" value="EF-Tu/eEF-1alpha/eIF2-gamma C-terminal domain"/>
    <property type="match status" value="1"/>
</dbReference>
<dbReference type="SUPFAM" id="SSF52540">
    <property type="entry name" value="P-loop containing nucleoside triphosphate hydrolases"/>
    <property type="match status" value="1"/>
</dbReference>
<dbReference type="SUPFAM" id="SSF50447">
    <property type="entry name" value="Translation proteins"/>
    <property type="match status" value="1"/>
</dbReference>
<dbReference type="PROSITE" id="PS00301">
    <property type="entry name" value="G_TR_1"/>
    <property type="match status" value="1"/>
</dbReference>
<dbReference type="PROSITE" id="PS51722">
    <property type="entry name" value="G_TR_2"/>
    <property type="match status" value="1"/>
</dbReference>
<protein>
    <recommendedName>
        <fullName evidence="2">Elongation factor Tu</fullName>
        <shortName evidence="2">EF-Tu</shortName>
        <ecNumber evidence="2">3.6.5.3</ecNumber>
    </recommendedName>
</protein>
<gene>
    <name evidence="2" type="primary">tufA</name>
    <name type="ordered locus">HI_0578</name>
</gene>
<gene>
    <name evidence="2" type="primary">tufB</name>
    <name type="ordered locus">HI_0632</name>
</gene>
<feature type="initiator methionine" description="Removed" evidence="1">
    <location>
        <position position="1"/>
    </location>
</feature>
<feature type="chain" id="PRO_0000091332" description="Elongation factor Tu">
    <location>
        <begin position="2"/>
        <end position="394"/>
    </location>
</feature>
<feature type="domain" description="tr-type G">
    <location>
        <begin position="10"/>
        <end position="204"/>
    </location>
</feature>
<feature type="region of interest" description="G1" evidence="1">
    <location>
        <begin position="19"/>
        <end position="26"/>
    </location>
</feature>
<feature type="region of interest" description="G2" evidence="1">
    <location>
        <begin position="60"/>
        <end position="64"/>
    </location>
</feature>
<feature type="region of interest" description="G3" evidence="1">
    <location>
        <begin position="81"/>
        <end position="84"/>
    </location>
</feature>
<feature type="region of interest" description="G4" evidence="1">
    <location>
        <begin position="136"/>
        <end position="139"/>
    </location>
</feature>
<feature type="region of interest" description="G5" evidence="1">
    <location>
        <begin position="174"/>
        <end position="176"/>
    </location>
</feature>
<feature type="binding site" evidence="2">
    <location>
        <begin position="19"/>
        <end position="26"/>
    </location>
    <ligand>
        <name>GTP</name>
        <dbReference type="ChEBI" id="CHEBI:37565"/>
    </ligand>
</feature>
<feature type="binding site" evidence="2">
    <location>
        <position position="26"/>
    </location>
    <ligand>
        <name>Mg(2+)</name>
        <dbReference type="ChEBI" id="CHEBI:18420"/>
    </ligand>
</feature>
<feature type="binding site" evidence="2">
    <location>
        <begin position="81"/>
        <end position="85"/>
    </location>
    <ligand>
        <name>GTP</name>
        <dbReference type="ChEBI" id="CHEBI:37565"/>
    </ligand>
</feature>
<feature type="binding site" evidence="2">
    <location>
        <begin position="136"/>
        <end position="139"/>
    </location>
    <ligand>
        <name>GTP</name>
        <dbReference type="ChEBI" id="CHEBI:37565"/>
    </ligand>
</feature>
<evidence type="ECO:0000250" key="1"/>
<evidence type="ECO:0000255" key="2">
    <source>
        <dbReference type="HAMAP-Rule" id="MF_00118"/>
    </source>
</evidence>
<organism>
    <name type="scientific">Haemophilus influenzae (strain ATCC 51907 / DSM 11121 / KW20 / Rd)</name>
    <dbReference type="NCBI Taxonomy" id="71421"/>
    <lineage>
        <taxon>Bacteria</taxon>
        <taxon>Pseudomonadati</taxon>
        <taxon>Pseudomonadota</taxon>
        <taxon>Gammaproteobacteria</taxon>
        <taxon>Pasteurellales</taxon>
        <taxon>Pasteurellaceae</taxon>
        <taxon>Haemophilus</taxon>
    </lineage>
</organism>
<keyword id="KW-0963">Cytoplasm</keyword>
<keyword id="KW-0251">Elongation factor</keyword>
<keyword id="KW-0342">GTP-binding</keyword>
<keyword id="KW-0378">Hydrolase</keyword>
<keyword id="KW-0460">Magnesium</keyword>
<keyword id="KW-0479">Metal-binding</keyword>
<keyword id="KW-0547">Nucleotide-binding</keyword>
<keyword id="KW-0648">Protein biosynthesis</keyword>
<keyword id="KW-1185">Reference proteome</keyword>
<accession>P43926</accession>
<comment type="function">
    <text evidence="2">GTP hydrolase that promotes the GTP-dependent binding of aminoacyl-tRNA to the A-site of ribosomes during protein biosynthesis.</text>
</comment>
<comment type="catalytic activity">
    <reaction evidence="2">
        <text>GTP + H2O = GDP + phosphate + H(+)</text>
        <dbReference type="Rhea" id="RHEA:19669"/>
        <dbReference type="ChEBI" id="CHEBI:15377"/>
        <dbReference type="ChEBI" id="CHEBI:15378"/>
        <dbReference type="ChEBI" id="CHEBI:37565"/>
        <dbReference type="ChEBI" id="CHEBI:43474"/>
        <dbReference type="ChEBI" id="CHEBI:58189"/>
        <dbReference type="EC" id="3.6.5.3"/>
    </reaction>
    <physiologicalReaction direction="left-to-right" evidence="2">
        <dbReference type="Rhea" id="RHEA:19670"/>
    </physiologicalReaction>
</comment>
<comment type="subunit">
    <text evidence="2">Monomer.</text>
</comment>
<comment type="subcellular location">
    <subcellularLocation>
        <location evidence="2">Cytoplasm</location>
    </subcellularLocation>
</comment>
<comment type="similarity">
    <text evidence="2">Belongs to the TRAFAC class translation factor GTPase superfamily. Classic translation factor GTPase family. EF-Tu/EF-1A subfamily.</text>
</comment>
<sequence>MSKEKFERTKPHVNVGTIGHVDHGKTTLTAAITTVLAKHYGGAARAFDQIDNAPEEKARGITINTSHVEYDTPTRHYAHVDCPGHADYVKNMITGAAQMDGAILVVAATDGPMPQTREHILLGRQVGVPYIIVFLNKCDMVDDEELLELVEMEVRELLSQYDFPGDDTPIVRGSALQALNGVAEWEEKILELANHLDTYIPEPERAIDQPFLLPIEDVFSISGRGTVVTGRVERGIIRTGDEVEIVGIKDTAKTTVTGVEMFRKLLDEGRAGENIGALLRGTKREEIERGQVLAKPGSITPHTDFESEVYVLSKDEGGRHTPFFKGYRPQFYFRTTDVTGTIELPEGVEMVMPGDNIKMTVSLIHPIAMDQGLRFAIREGGRTVGAGVVAKIIK</sequence>